<protein>
    <recommendedName>
        <fullName>RILP-like protein 2</fullName>
    </recommendedName>
    <alternativeName>
        <fullName>Rab-interacting lysosomal-like protein 2</fullName>
    </alternativeName>
</protein>
<accession>Q0P4J3</accession>
<evidence type="ECO:0000250" key="1"/>
<evidence type="ECO:0000255" key="2"/>
<evidence type="ECO:0000255" key="3">
    <source>
        <dbReference type="PROSITE-ProRule" id="PRU01112"/>
    </source>
</evidence>
<evidence type="ECO:0000255" key="4">
    <source>
        <dbReference type="PROSITE-ProRule" id="PRU01113"/>
    </source>
</evidence>
<evidence type="ECO:0000256" key="5">
    <source>
        <dbReference type="SAM" id="MobiDB-lite"/>
    </source>
</evidence>
<evidence type="ECO:0000305" key="6"/>
<keyword id="KW-0966">Cell projection</keyword>
<keyword id="KW-0969">Cilium</keyword>
<keyword id="KW-0175">Coiled coil</keyword>
<keyword id="KW-0963">Cytoplasm</keyword>
<keyword id="KW-0206">Cytoskeleton</keyword>
<keyword id="KW-0653">Protein transport</keyword>
<keyword id="KW-1185">Reference proteome</keyword>
<keyword id="KW-0813">Transport</keyword>
<sequence>METEQDEVAQDELGPEIALDKDPFQLTVEDVYDISHIVGQDLLKISREARGVSSLVSDLQFKIVRVLEMLEALVNQSSLSAEELKMERDNLKAEVERLLKDGPQMGVGPDKMVIDLTDPNRPRFTLQELRDVLQERNKLKVKLLVAQDELQCYKSGIIPSPDDQIVTLENESMITCSPRENESKEKSTVKSLFSFKQGKQT</sequence>
<proteinExistence type="evidence at transcript level"/>
<gene>
    <name type="primary">rilpl2</name>
</gene>
<dbReference type="EMBL" id="BC122050">
    <property type="protein sequence ID" value="AAI22051.1"/>
    <property type="molecule type" value="mRNA"/>
</dbReference>
<dbReference type="RefSeq" id="NP_001072546.2">
    <property type="nucleotide sequence ID" value="NM_001079078.2"/>
</dbReference>
<dbReference type="RefSeq" id="XP_012820894.2">
    <property type="nucleotide sequence ID" value="XM_012965440.3"/>
</dbReference>
<dbReference type="SMR" id="Q0P4J3"/>
<dbReference type="FunCoup" id="Q0P4J3">
    <property type="interactions" value="244"/>
</dbReference>
<dbReference type="STRING" id="8364.ENSXETP00000004832"/>
<dbReference type="PaxDb" id="8364-ENSXETP00000012804"/>
<dbReference type="DNASU" id="780001"/>
<dbReference type="GeneID" id="780001"/>
<dbReference type="KEGG" id="xtr:780001"/>
<dbReference type="AGR" id="Xenbase:XB-GENE-5715323"/>
<dbReference type="CTD" id="196383"/>
<dbReference type="Xenbase" id="XB-GENE-5715323">
    <property type="gene designation" value="rilpl2"/>
</dbReference>
<dbReference type="eggNOG" id="ENOG502S08B">
    <property type="taxonomic scope" value="Eukaryota"/>
</dbReference>
<dbReference type="InParanoid" id="Q0P4J3"/>
<dbReference type="OrthoDB" id="10069524at2759"/>
<dbReference type="Proteomes" id="UP000008143">
    <property type="component" value="Chromosome 1"/>
</dbReference>
<dbReference type="GO" id="GO:0005813">
    <property type="term" value="C:centrosome"/>
    <property type="evidence" value="ECO:0000250"/>
    <property type="project" value="UniProtKB"/>
</dbReference>
<dbReference type="GO" id="GO:0005929">
    <property type="term" value="C:cilium"/>
    <property type="evidence" value="ECO:0000250"/>
    <property type="project" value="UniProtKB"/>
</dbReference>
<dbReference type="GO" id="GO:0005829">
    <property type="term" value="C:cytosol"/>
    <property type="evidence" value="ECO:0007669"/>
    <property type="project" value="UniProtKB-SubCell"/>
</dbReference>
<dbReference type="GO" id="GO:0016020">
    <property type="term" value="C:membrane"/>
    <property type="evidence" value="ECO:0007669"/>
    <property type="project" value="GOC"/>
</dbReference>
<dbReference type="GO" id="GO:0046983">
    <property type="term" value="F:protein dimerization activity"/>
    <property type="evidence" value="ECO:0007669"/>
    <property type="project" value="InterPro"/>
</dbReference>
<dbReference type="GO" id="GO:0003382">
    <property type="term" value="P:epithelial cell morphogenesis"/>
    <property type="evidence" value="ECO:0000250"/>
    <property type="project" value="UniProtKB"/>
</dbReference>
<dbReference type="GO" id="GO:1903445">
    <property type="term" value="P:protein transport from ciliary membrane to plasma membrane"/>
    <property type="evidence" value="ECO:0000250"/>
    <property type="project" value="UniProtKB"/>
</dbReference>
<dbReference type="CDD" id="cd14445">
    <property type="entry name" value="RILP-like"/>
    <property type="match status" value="1"/>
</dbReference>
<dbReference type="FunFam" id="1.20.58.1770:FF:000003">
    <property type="entry name" value="RILP-like protein 2 isoform X1"/>
    <property type="match status" value="1"/>
</dbReference>
<dbReference type="Gene3D" id="1.20.58.1770">
    <property type="match status" value="1"/>
</dbReference>
<dbReference type="Gene3D" id="6.10.230.10">
    <property type="match status" value="1"/>
</dbReference>
<dbReference type="InterPro" id="IPR051241">
    <property type="entry name" value="DZIP_RILPL"/>
</dbReference>
<dbReference type="InterPro" id="IPR034743">
    <property type="entry name" value="RH1"/>
</dbReference>
<dbReference type="InterPro" id="IPR034744">
    <property type="entry name" value="RH2"/>
</dbReference>
<dbReference type="InterPro" id="IPR021563">
    <property type="entry name" value="RILP_dimer"/>
</dbReference>
<dbReference type="PANTHER" id="PTHR21502:SF2">
    <property type="entry name" value="RILP-LIKE PROTEIN 2"/>
    <property type="match status" value="1"/>
</dbReference>
<dbReference type="PANTHER" id="PTHR21502">
    <property type="entry name" value="ZINC FINGER PROTEIN DZIP1"/>
    <property type="match status" value="1"/>
</dbReference>
<dbReference type="Pfam" id="PF09744">
    <property type="entry name" value="RH1"/>
    <property type="match status" value="1"/>
</dbReference>
<dbReference type="Pfam" id="PF11461">
    <property type="entry name" value="RILP"/>
    <property type="match status" value="1"/>
</dbReference>
<dbReference type="SUPFAM" id="SSF161256">
    <property type="entry name" value="RILP dimerisation region"/>
    <property type="match status" value="1"/>
</dbReference>
<dbReference type="PROSITE" id="PS51776">
    <property type="entry name" value="RH1"/>
    <property type="match status" value="1"/>
</dbReference>
<dbReference type="PROSITE" id="PS51777">
    <property type="entry name" value="RH2"/>
    <property type="match status" value="1"/>
</dbReference>
<reference key="1">
    <citation type="submission" date="2006-08" db="EMBL/GenBank/DDBJ databases">
        <authorList>
            <consortium name="NIH - Xenopus Gene Collection (XGC) project"/>
        </authorList>
    </citation>
    <scope>NUCLEOTIDE SEQUENCE [LARGE SCALE MRNA]</scope>
    <source>
        <strain>N6</strain>
        <tissue>Oviduct</tissue>
    </source>
</reference>
<organism>
    <name type="scientific">Xenopus tropicalis</name>
    <name type="common">Western clawed frog</name>
    <name type="synonym">Silurana tropicalis</name>
    <dbReference type="NCBI Taxonomy" id="8364"/>
    <lineage>
        <taxon>Eukaryota</taxon>
        <taxon>Metazoa</taxon>
        <taxon>Chordata</taxon>
        <taxon>Craniata</taxon>
        <taxon>Vertebrata</taxon>
        <taxon>Euteleostomi</taxon>
        <taxon>Amphibia</taxon>
        <taxon>Batrachia</taxon>
        <taxon>Anura</taxon>
        <taxon>Pipoidea</taxon>
        <taxon>Pipidae</taxon>
        <taxon>Xenopodinae</taxon>
        <taxon>Xenopus</taxon>
        <taxon>Silurana</taxon>
    </lineage>
</organism>
<feature type="chain" id="PRO_0000317010" description="RILP-like protein 2">
    <location>
        <begin position="1"/>
        <end position="201"/>
    </location>
</feature>
<feature type="domain" description="RH1" evidence="3">
    <location>
        <begin position="14"/>
        <end position="108"/>
    </location>
</feature>
<feature type="domain" description="RH2" evidence="4">
    <location>
        <begin position="121"/>
        <end position="197"/>
    </location>
</feature>
<feature type="region of interest" description="Disordered" evidence="5">
    <location>
        <begin position="177"/>
        <end position="201"/>
    </location>
</feature>
<feature type="coiled-coil region" evidence="2">
    <location>
        <begin position="67"/>
        <end position="155"/>
    </location>
</feature>
<feature type="compositionally biased region" description="Basic and acidic residues" evidence="5">
    <location>
        <begin position="179"/>
        <end position="188"/>
    </location>
</feature>
<comment type="function">
    <text evidence="1">Involved in cell shape and neuronal morphogenesis, positively regulating the establishment and maintenance of dendritic spines. Plays a role in cellular protein transport (By similarity).</text>
</comment>
<comment type="subcellular location">
    <subcellularLocation>
        <location evidence="1">Cytoplasm</location>
        <location evidence="1">Cytosol</location>
    </subcellularLocation>
    <subcellularLocation>
        <location evidence="1">Cytoplasm</location>
        <location evidence="1">Cytoskeleton</location>
        <location evidence="1">Microtubule organizing center</location>
        <location evidence="1">Centrosome</location>
    </subcellularLocation>
    <subcellularLocation>
        <location evidence="1">Cell projection</location>
        <location evidence="1">Cilium</location>
    </subcellularLocation>
</comment>
<comment type="similarity">
    <text evidence="6">Belongs to the RILPL family.</text>
</comment>
<name>RIPL2_XENTR</name>